<sequence>MSDYPPPNYPPPNHPQYQQQQDETYHVRPDMERQQDFGYYEKPTPSQNFDDSFKVEKPKFNDWPFAIFFWLVVAGFIAVAGITLNALRSTYGFQGGSIYGSGNTFTLNTNTIILFAFIIVMAFILSAAIIVFARLAPKAFIVTGVILNVVLGIGTAIFYFVEKYYSAAIVFLIFALFGAWCYWSSRHRIPLSATILTIVIDVMKMYPSTLIASFIGLIFSAAFSALFSIVIVATYVKYDPNSNNEACSVGGGSCSKGKLIGVLVFVFFAGYYISEVIRNVIHVVIAGIYGTWYYLANSDQGAPKHPALSSLKRALTYCFGSITFGSLIVSLIQLLRQFISILRSNFAADGNGWGVCGMIILDFFVGFIDWLVRYLNKYAYCYVALYGKSYIKSAKDTFDLIRFKGMDALINDMFINTALNLYSLFVAYLVALLAYLYLKFTKPEYNSGGAFYAPVIAFAFLIAGQINRISLTVIESGTATFFVALAKDPEIFQMTNRNRFDDIFRNYPQVLEKITSDH</sequence>
<feature type="chain" id="PRO_0000191731" description="Protein PNS1">
    <location>
        <begin position="1"/>
        <end position="518"/>
    </location>
</feature>
<feature type="topological domain" description="Cytoplasmic" evidence="2">
    <location>
        <begin position="1"/>
        <end position="63"/>
    </location>
</feature>
<feature type="transmembrane region" description="Helical" evidence="2">
    <location>
        <begin position="64"/>
        <end position="84"/>
    </location>
</feature>
<feature type="topological domain" description="Extracellular" evidence="2">
    <location>
        <begin position="85"/>
        <end position="111"/>
    </location>
</feature>
<feature type="transmembrane region" description="Helical" evidence="2">
    <location>
        <begin position="112"/>
        <end position="132"/>
    </location>
</feature>
<feature type="topological domain" description="Cytoplasmic" evidence="2">
    <location>
        <begin position="133"/>
        <end position="139"/>
    </location>
</feature>
<feature type="transmembrane region" description="Helical" evidence="2">
    <location>
        <begin position="140"/>
        <end position="160"/>
    </location>
</feature>
<feature type="topological domain" description="Extracellular" evidence="2">
    <location>
        <begin position="161"/>
        <end position="163"/>
    </location>
</feature>
<feature type="transmembrane region" description="Helical" evidence="2">
    <location>
        <begin position="164"/>
        <end position="184"/>
    </location>
</feature>
<feature type="topological domain" description="Cytoplasmic" evidence="2">
    <location>
        <begin position="185"/>
        <end position="210"/>
    </location>
</feature>
<feature type="transmembrane region" description="Helical" evidence="2">
    <location>
        <begin position="211"/>
        <end position="231"/>
    </location>
</feature>
<feature type="topological domain" description="Extracellular" evidence="2">
    <location>
        <begin position="232"/>
        <end position="256"/>
    </location>
</feature>
<feature type="transmembrane region" description="Helical" evidence="2">
    <location>
        <begin position="257"/>
        <end position="277"/>
    </location>
</feature>
<feature type="topological domain" description="Cytoplasmic" evidence="2">
    <location>
        <begin position="278"/>
        <end position="314"/>
    </location>
</feature>
<feature type="transmembrane region" description="Helical" evidence="2">
    <location>
        <begin position="315"/>
        <end position="335"/>
    </location>
</feature>
<feature type="topological domain" description="Extracellular" evidence="2">
    <location>
        <begin position="336"/>
        <end position="351"/>
    </location>
</feature>
<feature type="transmembrane region" description="Helical" evidence="2">
    <location>
        <begin position="352"/>
        <end position="372"/>
    </location>
</feature>
<feature type="topological domain" description="Cytoplasmic" evidence="2">
    <location>
        <begin position="373"/>
        <end position="417"/>
    </location>
</feature>
<feature type="transmembrane region" description="Helical" evidence="2">
    <location>
        <begin position="418"/>
        <end position="438"/>
    </location>
</feature>
<feature type="topological domain" description="Extracellular" evidence="2">
    <location>
        <begin position="439"/>
        <end position="445"/>
    </location>
</feature>
<feature type="transmembrane region" description="Helical" evidence="2">
    <location>
        <begin position="446"/>
        <end position="466"/>
    </location>
</feature>
<feature type="topological domain" description="Cytoplasmic" evidence="2">
    <location>
        <begin position="467"/>
        <end position="518"/>
    </location>
</feature>
<feature type="region of interest" description="Disordered" evidence="3">
    <location>
        <begin position="1"/>
        <end position="24"/>
    </location>
</feature>
<feature type="compositionally biased region" description="Pro residues" evidence="3">
    <location>
        <begin position="1"/>
        <end position="14"/>
    </location>
</feature>
<proteinExistence type="inferred from homology"/>
<organism>
    <name type="scientific">Candida albicans (strain SC5314 / ATCC MYA-2876)</name>
    <name type="common">Yeast</name>
    <dbReference type="NCBI Taxonomy" id="237561"/>
    <lineage>
        <taxon>Eukaryota</taxon>
        <taxon>Fungi</taxon>
        <taxon>Dikarya</taxon>
        <taxon>Ascomycota</taxon>
        <taxon>Saccharomycotina</taxon>
        <taxon>Pichiomycetes</taxon>
        <taxon>Debaryomycetaceae</taxon>
        <taxon>Candida/Lodderomyces clade</taxon>
        <taxon>Candida</taxon>
    </lineage>
</organism>
<name>PNS1_CANAL</name>
<reference key="1">
    <citation type="journal article" date="2004" name="Proc. Natl. Acad. Sci. U.S.A.">
        <title>The diploid genome sequence of Candida albicans.</title>
        <authorList>
            <person name="Jones T."/>
            <person name="Federspiel N.A."/>
            <person name="Chibana H."/>
            <person name="Dungan J."/>
            <person name="Kalman S."/>
            <person name="Magee B.B."/>
            <person name="Newport G."/>
            <person name="Thorstenson Y.R."/>
            <person name="Agabian N."/>
            <person name="Magee P.T."/>
            <person name="Davis R.W."/>
            <person name="Scherer S."/>
        </authorList>
    </citation>
    <scope>NUCLEOTIDE SEQUENCE [LARGE SCALE GENOMIC DNA]</scope>
    <source>
        <strain>SC5314 / ATCC MYA-2876</strain>
    </source>
</reference>
<reference key="2">
    <citation type="journal article" date="2007" name="Genome Biol.">
        <title>Assembly of the Candida albicans genome into sixteen supercontigs aligned on the eight chromosomes.</title>
        <authorList>
            <person name="van het Hoog M."/>
            <person name="Rast T.J."/>
            <person name="Martchenko M."/>
            <person name="Grindle S."/>
            <person name="Dignard D."/>
            <person name="Hogues H."/>
            <person name="Cuomo C."/>
            <person name="Berriman M."/>
            <person name="Scherer S."/>
            <person name="Magee B.B."/>
            <person name="Whiteway M."/>
            <person name="Chibana H."/>
            <person name="Nantel A."/>
            <person name="Magee P.T."/>
        </authorList>
    </citation>
    <scope>GENOME REANNOTATION</scope>
    <source>
        <strain>SC5314 / ATCC MYA-2876</strain>
    </source>
</reference>
<reference key="3">
    <citation type="journal article" date="2013" name="Genome Biol.">
        <title>Assembly of a phased diploid Candida albicans genome facilitates allele-specific measurements and provides a simple model for repeat and indel structure.</title>
        <authorList>
            <person name="Muzzey D."/>
            <person name="Schwartz K."/>
            <person name="Weissman J.S."/>
            <person name="Sherlock G."/>
        </authorList>
    </citation>
    <scope>NUCLEOTIDE SEQUENCE [LARGE SCALE GENOMIC DNA]</scope>
    <scope>GENOME REANNOTATION</scope>
    <source>
        <strain>SC5314 / ATCC MYA-2876</strain>
    </source>
</reference>
<dbReference type="EMBL" id="CP017623">
    <property type="protein sequence ID" value="AOW25729.1"/>
    <property type="molecule type" value="Genomic_DNA"/>
</dbReference>
<dbReference type="RefSeq" id="XP_719039.1">
    <property type="nucleotide sequence ID" value="XM_713946.1"/>
</dbReference>
<dbReference type="SMR" id="Q5AB93"/>
<dbReference type="FunCoup" id="Q5AB93">
    <property type="interactions" value="244"/>
</dbReference>
<dbReference type="STRING" id="237561.Q5AB93"/>
<dbReference type="EnsemblFungi" id="C1_00310W_A-T">
    <property type="protein sequence ID" value="C1_00310W_A-T-p1"/>
    <property type="gene ID" value="C1_00310W_A"/>
</dbReference>
<dbReference type="GeneID" id="3639298"/>
<dbReference type="KEGG" id="cal:CAALFM_C100310WA"/>
<dbReference type="CGD" id="CAL0000201857">
    <property type="gene designation" value="orf19.13498"/>
</dbReference>
<dbReference type="VEuPathDB" id="FungiDB:C1_00310W_A"/>
<dbReference type="eggNOG" id="KOG1362">
    <property type="taxonomic scope" value="Eukaryota"/>
</dbReference>
<dbReference type="HOGENOM" id="CLU_026724_0_0_1"/>
<dbReference type="InParanoid" id="Q5AB93"/>
<dbReference type="OMA" id="DTIFVAM"/>
<dbReference type="OrthoDB" id="44736at2759"/>
<dbReference type="PRO" id="PR:Q5AB93"/>
<dbReference type="Proteomes" id="UP000000559">
    <property type="component" value="Chromosome 1"/>
</dbReference>
<dbReference type="GO" id="GO:0016020">
    <property type="term" value="C:membrane"/>
    <property type="evidence" value="ECO:0000318"/>
    <property type="project" value="GO_Central"/>
</dbReference>
<dbReference type="GO" id="GO:0005886">
    <property type="term" value="C:plasma membrane"/>
    <property type="evidence" value="ECO:0007669"/>
    <property type="project" value="UniProtKB-SubCell"/>
</dbReference>
<dbReference type="GO" id="GO:0022857">
    <property type="term" value="F:transmembrane transporter activity"/>
    <property type="evidence" value="ECO:0000318"/>
    <property type="project" value="GO_Central"/>
</dbReference>
<dbReference type="GO" id="GO:0055085">
    <property type="term" value="P:transmembrane transport"/>
    <property type="evidence" value="ECO:0000318"/>
    <property type="project" value="GO_Central"/>
</dbReference>
<dbReference type="InterPro" id="IPR007603">
    <property type="entry name" value="Choline_transptr-like"/>
</dbReference>
<dbReference type="PANTHER" id="PTHR12385">
    <property type="entry name" value="CHOLINE TRANSPORTER-LIKE (SLC FAMILY 44)"/>
    <property type="match status" value="1"/>
</dbReference>
<dbReference type="PANTHER" id="PTHR12385:SF4">
    <property type="entry name" value="PROTEIN PNS1"/>
    <property type="match status" value="1"/>
</dbReference>
<dbReference type="Pfam" id="PF04515">
    <property type="entry name" value="Choline_transpo"/>
    <property type="match status" value="1"/>
</dbReference>
<protein>
    <recommendedName>
        <fullName>Protein PNS1</fullName>
    </recommendedName>
</protein>
<keyword id="KW-1003">Cell membrane</keyword>
<keyword id="KW-0472">Membrane</keyword>
<keyword id="KW-1185">Reference proteome</keyword>
<keyword id="KW-0812">Transmembrane</keyword>
<keyword id="KW-1133">Transmembrane helix</keyword>
<keyword id="KW-0813">Transport</keyword>
<gene>
    <name type="primary">PNS1</name>
    <name type="ordered locus">CAALFM_C100310WA</name>
    <name type="ORF">CaO19.13498</name>
    <name type="ORF">CaO19.6077</name>
</gene>
<evidence type="ECO:0000250" key="1"/>
<evidence type="ECO:0000255" key="2"/>
<evidence type="ECO:0000256" key="3">
    <source>
        <dbReference type="SAM" id="MobiDB-lite"/>
    </source>
</evidence>
<evidence type="ECO:0000305" key="4"/>
<comment type="function">
    <text evidence="1">Probably involved in transport through the plasma membrane.</text>
</comment>
<comment type="subcellular location">
    <subcellularLocation>
        <location evidence="1">Cell membrane</location>
        <topology evidence="1">Multi-pass membrane protein</topology>
    </subcellularLocation>
</comment>
<comment type="similarity">
    <text evidence="4">Belongs to the CTL (choline transporter-like) family.</text>
</comment>
<accession>Q5AB93</accession>
<accession>A0A1D8PC65</accession>